<feature type="chain" id="PRO_1000123263" description="Phosphopantetheine adenylyltransferase">
    <location>
        <begin position="1"/>
        <end position="163"/>
    </location>
</feature>
<feature type="binding site" evidence="1">
    <location>
        <begin position="10"/>
        <end position="11"/>
    </location>
    <ligand>
        <name>ATP</name>
        <dbReference type="ChEBI" id="CHEBI:30616"/>
    </ligand>
</feature>
<feature type="binding site" evidence="1">
    <location>
        <position position="10"/>
    </location>
    <ligand>
        <name>substrate</name>
    </ligand>
</feature>
<feature type="binding site" evidence="1">
    <location>
        <position position="18"/>
    </location>
    <ligand>
        <name>ATP</name>
        <dbReference type="ChEBI" id="CHEBI:30616"/>
    </ligand>
</feature>
<feature type="binding site" evidence="1">
    <location>
        <position position="42"/>
    </location>
    <ligand>
        <name>substrate</name>
    </ligand>
</feature>
<feature type="binding site" evidence="1">
    <location>
        <position position="74"/>
    </location>
    <ligand>
        <name>substrate</name>
    </ligand>
</feature>
<feature type="binding site" evidence="1">
    <location>
        <position position="88"/>
    </location>
    <ligand>
        <name>substrate</name>
    </ligand>
</feature>
<feature type="binding site" evidence="1">
    <location>
        <begin position="89"/>
        <end position="91"/>
    </location>
    <ligand>
        <name>ATP</name>
        <dbReference type="ChEBI" id="CHEBI:30616"/>
    </ligand>
</feature>
<feature type="binding site" evidence="1">
    <location>
        <position position="99"/>
    </location>
    <ligand>
        <name>ATP</name>
        <dbReference type="ChEBI" id="CHEBI:30616"/>
    </ligand>
</feature>
<feature type="binding site" evidence="1">
    <location>
        <begin position="124"/>
        <end position="130"/>
    </location>
    <ligand>
        <name>ATP</name>
        <dbReference type="ChEBI" id="CHEBI:30616"/>
    </ligand>
</feature>
<feature type="site" description="Transition state stabilizer" evidence="1">
    <location>
        <position position="18"/>
    </location>
</feature>
<gene>
    <name evidence="1" type="primary">coaD</name>
    <name type="ordered locus">BCQ_3716</name>
</gene>
<keyword id="KW-0067">ATP-binding</keyword>
<keyword id="KW-0173">Coenzyme A biosynthesis</keyword>
<keyword id="KW-0963">Cytoplasm</keyword>
<keyword id="KW-0460">Magnesium</keyword>
<keyword id="KW-0547">Nucleotide-binding</keyword>
<keyword id="KW-0548">Nucleotidyltransferase</keyword>
<keyword id="KW-0808">Transferase</keyword>
<protein>
    <recommendedName>
        <fullName evidence="1">Phosphopantetheine adenylyltransferase</fullName>
        <ecNumber evidence="1">2.7.7.3</ecNumber>
    </recommendedName>
    <alternativeName>
        <fullName evidence="1">Dephospho-CoA pyrophosphorylase</fullName>
    </alternativeName>
    <alternativeName>
        <fullName evidence="1">Pantetheine-phosphate adenylyltransferase</fullName>
        <shortName evidence="1">PPAT</shortName>
    </alternativeName>
</protein>
<proteinExistence type="inferred from homology"/>
<evidence type="ECO:0000255" key="1">
    <source>
        <dbReference type="HAMAP-Rule" id="MF_00151"/>
    </source>
</evidence>
<name>COAD_BACCQ</name>
<comment type="function">
    <text evidence="1">Reversibly transfers an adenylyl group from ATP to 4'-phosphopantetheine, yielding dephospho-CoA (dPCoA) and pyrophosphate.</text>
</comment>
<comment type="catalytic activity">
    <reaction evidence="1">
        <text>(R)-4'-phosphopantetheine + ATP + H(+) = 3'-dephospho-CoA + diphosphate</text>
        <dbReference type="Rhea" id="RHEA:19801"/>
        <dbReference type="ChEBI" id="CHEBI:15378"/>
        <dbReference type="ChEBI" id="CHEBI:30616"/>
        <dbReference type="ChEBI" id="CHEBI:33019"/>
        <dbReference type="ChEBI" id="CHEBI:57328"/>
        <dbReference type="ChEBI" id="CHEBI:61723"/>
        <dbReference type="EC" id="2.7.7.3"/>
    </reaction>
</comment>
<comment type="cofactor">
    <cofactor evidence="1">
        <name>Mg(2+)</name>
        <dbReference type="ChEBI" id="CHEBI:18420"/>
    </cofactor>
</comment>
<comment type="pathway">
    <text evidence="1">Cofactor biosynthesis; coenzyme A biosynthesis; CoA from (R)-pantothenate: step 4/5.</text>
</comment>
<comment type="subunit">
    <text evidence="1">Homohexamer.</text>
</comment>
<comment type="subcellular location">
    <subcellularLocation>
        <location evidence="1">Cytoplasm</location>
    </subcellularLocation>
</comment>
<comment type="similarity">
    <text evidence="1">Belongs to the bacterial CoaD family.</text>
</comment>
<reference key="1">
    <citation type="journal article" date="2009" name="J. Bacteriol.">
        <title>Complete genome sequence of the extremophilic Bacillus cereus strain Q1 with industrial applications.</title>
        <authorList>
            <person name="Xiong Z."/>
            <person name="Jiang Y."/>
            <person name="Qi D."/>
            <person name="Lu H."/>
            <person name="Yang F."/>
            <person name="Yang J."/>
            <person name="Chen L."/>
            <person name="Sun L."/>
            <person name="Xu X."/>
            <person name="Xue Y."/>
            <person name="Zhu Y."/>
            <person name="Jin Q."/>
        </authorList>
    </citation>
    <scope>NUCLEOTIDE SEQUENCE [LARGE SCALE GENOMIC DNA]</scope>
    <source>
        <strain>Q1</strain>
    </source>
</reference>
<organism>
    <name type="scientific">Bacillus cereus (strain Q1)</name>
    <dbReference type="NCBI Taxonomy" id="361100"/>
    <lineage>
        <taxon>Bacteria</taxon>
        <taxon>Bacillati</taxon>
        <taxon>Bacillota</taxon>
        <taxon>Bacilli</taxon>
        <taxon>Bacillales</taxon>
        <taxon>Bacillaceae</taxon>
        <taxon>Bacillus</taxon>
        <taxon>Bacillus cereus group</taxon>
    </lineage>
</organism>
<accession>B9IW07</accession>
<sequence>MTSIAISSGSFDPITLGHLDIIKRGAKVFDEVYVVVLNNSSKKPFFSVEERLDLIREATKDIPNVKVDSHSGLLVEYAKMRNANAILRGLRAVSDFEYEMQITSMNRKLDENIETFFIMTNNQYSFLSSSIVKEVARYGGSVVDLVPPVVERALKEKFQTPLK</sequence>
<dbReference type="EC" id="2.7.7.3" evidence="1"/>
<dbReference type="EMBL" id="CP000227">
    <property type="protein sequence ID" value="ACM14144.1"/>
    <property type="molecule type" value="Genomic_DNA"/>
</dbReference>
<dbReference type="SMR" id="B9IW07"/>
<dbReference type="KEGG" id="bcq:BCQ_3716"/>
<dbReference type="HOGENOM" id="CLU_100149_0_1_9"/>
<dbReference type="UniPathway" id="UPA00241">
    <property type="reaction ID" value="UER00355"/>
</dbReference>
<dbReference type="Proteomes" id="UP000000441">
    <property type="component" value="Chromosome"/>
</dbReference>
<dbReference type="GO" id="GO:0005737">
    <property type="term" value="C:cytoplasm"/>
    <property type="evidence" value="ECO:0007669"/>
    <property type="project" value="UniProtKB-SubCell"/>
</dbReference>
<dbReference type="GO" id="GO:0005524">
    <property type="term" value="F:ATP binding"/>
    <property type="evidence" value="ECO:0007669"/>
    <property type="project" value="UniProtKB-KW"/>
</dbReference>
<dbReference type="GO" id="GO:0004595">
    <property type="term" value="F:pantetheine-phosphate adenylyltransferase activity"/>
    <property type="evidence" value="ECO:0007669"/>
    <property type="project" value="UniProtKB-UniRule"/>
</dbReference>
<dbReference type="GO" id="GO:0015937">
    <property type="term" value="P:coenzyme A biosynthetic process"/>
    <property type="evidence" value="ECO:0007669"/>
    <property type="project" value="UniProtKB-UniRule"/>
</dbReference>
<dbReference type="CDD" id="cd02163">
    <property type="entry name" value="PPAT"/>
    <property type="match status" value="1"/>
</dbReference>
<dbReference type="FunFam" id="3.40.50.620:FF:000012">
    <property type="entry name" value="Phosphopantetheine adenylyltransferase"/>
    <property type="match status" value="1"/>
</dbReference>
<dbReference type="Gene3D" id="3.40.50.620">
    <property type="entry name" value="HUPs"/>
    <property type="match status" value="1"/>
</dbReference>
<dbReference type="HAMAP" id="MF_00151">
    <property type="entry name" value="PPAT_bact"/>
    <property type="match status" value="1"/>
</dbReference>
<dbReference type="InterPro" id="IPR004821">
    <property type="entry name" value="Cyt_trans-like"/>
</dbReference>
<dbReference type="InterPro" id="IPR001980">
    <property type="entry name" value="PPAT"/>
</dbReference>
<dbReference type="InterPro" id="IPR014729">
    <property type="entry name" value="Rossmann-like_a/b/a_fold"/>
</dbReference>
<dbReference type="NCBIfam" id="TIGR01510">
    <property type="entry name" value="coaD_prev_kdtB"/>
    <property type="match status" value="1"/>
</dbReference>
<dbReference type="NCBIfam" id="TIGR00125">
    <property type="entry name" value="cyt_tran_rel"/>
    <property type="match status" value="1"/>
</dbReference>
<dbReference type="PANTHER" id="PTHR21342">
    <property type="entry name" value="PHOSPHOPANTETHEINE ADENYLYLTRANSFERASE"/>
    <property type="match status" value="1"/>
</dbReference>
<dbReference type="PANTHER" id="PTHR21342:SF1">
    <property type="entry name" value="PHOSPHOPANTETHEINE ADENYLYLTRANSFERASE"/>
    <property type="match status" value="1"/>
</dbReference>
<dbReference type="Pfam" id="PF01467">
    <property type="entry name" value="CTP_transf_like"/>
    <property type="match status" value="1"/>
</dbReference>
<dbReference type="PRINTS" id="PR01020">
    <property type="entry name" value="LPSBIOSNTHSS"/>
</dbReference>
<dbReference type="SUPFAM" id="SSF52374">
    <property type="entry name" value="Nucleotidylyl transferase"/>
    <property type="match status" value="1"/>
</dbReference>